<dbReference type="EC" id="2.1.2.11" evidence="1"/>
<dbReference type="EMBL" id="AE013598">
    <property type="protein sequence ID" value="AAW75618.1"/>
    <property type="molecule type" value="Genomic_DNA"/>
</dbReference>
<dbReference type="SMR" id="Q5H0A3"/>
<dbReference type="STRING" id="291331.XOO2364"/>
<dbReference type="KEGG" id="xoo:XOO2364"/>
<dbReference type="HOGENOM" id="CLU_036645_1_0_6"/>
<dbReference type="UniPathway" id="UPA00028">
    <property type="reaction ID" value="UER00003"/>
</dbReference>
<dbReference type="Proteomes" id="UP000006735">
    <property type="component" value="Chromosome"/>
</dbReference>
<dbReference type="GO" id="GO:0005737">
    <property type="term" value="C:cytoplasm"/>
    <property type="evidence" value="ECO:0007669"/>
    <property type="project" value="UniProtKB-SubCell"/>
</dbReference>
<dbReference type="GO" id="GO:0003864">
    <property type="term" value="F:3-methyl-2-oxobutanoate hydroxymethyltransferase activity"/>
    <property type="evidence" value="ECO:0007669"/>
    <property type="project" value="UniProtKB-UniRule"/>
</dbReference>
<dbReference type="GO" id="GO:0000287">
    <property type="term" value="F:magnesium ion binding"/>
    <property type="evidence" value="ECO:0007669"/>
    <property type="project" value="TreeGrafter"/>
</dbReference>
<dbReference type="GO" id="GO:0015940">
    <property type="term" value="P:pantothenate biosynthetic process"/>
    <property type="evidence" value="ECO:0007669"/>
    <property type="project" value="UniProtKB-UniRule"/>
</dbReference>
<dbReference type="CDD" id="cd06557">
    <property type="entry name" value="KPHMT-like"/>
    <property type="match status" value="1"/>
</dbReference>
<dbReference type="FunFam" id="3.20.20.60:FF:000032">
    <property type="entry name" value="3-methyl-2-oxobutanoate hydroxymethyltransferase"/>
    <property type="match status" value="1"/>
</dbReference>
<dbReference type="Gene3D" id="3.20.20.60">
    <property type="entry name" value="Phosphoenolpyruvate-binding domains"/>
    <property type="match status" value="1"/>
</dbReference>
<dbReference type="HAMAP" id="MF_00156">
    <property type="entry name" value="PanB"/>
    <property type="match status" value="1"/>
</dbReference>
<dbReference type="InterPro" id="IPR003700">
    <property type="entry name" value="Pantoate_hydroxy_MeTrfase"/>
</dbReference>
<dbReference type="InterPro" id="IPR015813">
    <property type="entry name" value="Pyrv/PenolPyrv_kinase-like_dom"/>
</dbReference>
<dbReference type="InterPro" id="IPR040442">
    <property type="entry name" value="Pyrv_kinase-like_dom_sf"/>
</dbReference>
<dbReference type="NCBIfam" id="TIGR00222">
    <property type="entry name" value="panB"/>
    <property type="match status" value="1"/>
</dbReference>
<dbReference type="NCBIfam" id="NF001452">
    <property type="entry name" value="PRK00311.1"/>
    <property type="match status" value="1"/>
</dbReference>
<dbReference type="PANTHER" id="PTHR20881">
    <property type="entry name" value="3-METHYL-2-OXOBUTANOATE HYDROXYMETHYLTRANSFERASE"/>
    <property type="match status" value="1"/>
</dbReference>
<dbReference type="PANTHER" id="PTHR20881:SF0">
    <property type="entry name" value="3-METHYL-2-OXOBUTANOATE HYDROXYMETHYLTRANSFERASE"/>
    <property type="match status" value="1"/>
</dbReference>
<dbReference type="Pfam" id="PF02548">
    <property type="entry name" value="Pantoate_transf"/>
    <property type="match status" value="1"/>
</dbReference>
<dbReference type="PIRSF" id="PIRSF000388">
    <property type="entry name" value="Pantoate_hydroxy_MeTrfase"/>
    <property type="match status" value="1"/>
</dbReference>
<dbReference type="SUPFAM" id="SSF51621">
    <property type="entry name" value="Phosphoenolpyruvate/pyruvate domain"/>
    <property type="match status" value="1"/>
</dbReference>
<keyword id="KW-0963">Cytoplasm</keyword>
<keyword id="KW-0460">Magnesium</keyword>
<keyword id="KW-0479">Metal-binding</keyword>
<keyword id="KW-0566">Pantothenate biosynthesis</keyword>
<keyword id="KW-1185">Reference proteome</keyword>
<keyword id="KW-0808">Transferase</keyword>
<gene>
    <name evidence="1" type="primary">panB</name>
    <name type="ordered locus">XOO2364</name>
</gene>
<reference key="1">
    <citation type="journal article" date="2005" name="Nucleic Acids Res.">
        <title>The genome sequence of Xanthomonas oryzae pathovar oryzae KACC10331, the bacterial blight pathogen of rice.</title>
        <authorList>
            <person name="Lee B.-M."/>
            <person name="Park Y.-J."/>
            <person name="Park D.-S."/>
            <person name="Kang H.-W."/>
            <person name="Kim J.-G."/>
            <person name="Song E.-S."/>
            <person name="Park I.-C."/>
            <person name="Yoon U.-H."/>
            <person name="Hahn J.-H."/>
            <person name="Koo B.-S."/>
            <person name="Lee G.-B."/>
            <person name="Kim H."/>
            <person name="Park H.-S."/>
            <person name="Yoon K.-O."/>
            <person name="Kim J.-H."/>
            <person name="Jung C.-H."/>
            <person name="Koh N.-H."/>
            <person name="Seo J.-S."/>
            <person name="Go S.-J."/>
        </authorList>
    </citation>
    <scope>NUCLEOTIDE SEQUENCE [LARGE SCALE GENOMIC DNA]</scope>
    <source>
        <strain>KACC10331 / KXO85</strain>
    </source>
</reference>
<proteinExistence type="inferred from homology"/>
<sequence>MSSHADSNPWTVPALAQAKRAGRKLVMLTAYDASFARTFDVNGVDLILVGDSLGMVMQGHDSTLAVTTADMVYHTAAVARALDRALLVADLSFQADATPERALDAATQLLQAGAEMVKIEGAGHKLEVIRYLVEREIPVCSHLGLTPQSVLRFGGYKVQGRGEAGEQLRRDAQAVVDAGASLVVLECVPTPIATQISAELSVPTIGIGAGPGCDGQVLVMHDMLGLDSGHRRPKFVKDFLAEGGSVAGAVRAYAQAVRDGSFPDAEHAYAA</sequence>
<evidence type="ECO:0000255" key="1">
    <source>
        <dbReference type="HAMAP-Rule" id="MF_00156"/>
    </source>
</evidence>
<accession>Q5H0A3</accession>
<name>PANB_XANOR</name>
<protein>
    <recommendedName>
        <fullName evidence="1">3-methyl-2-oxobutanoate hydroxymethyltransferase</fullName>
        <ecNumber evidence="1">2.1.2.11</ecNumber>
    </recommendedName>
    <alternativeName>
        <fullName evidence="1">Ketopantoate hydroxymethyltransferase</fullName>
        <shortName evidence="1">KPHMT</shortName>
    </alternativeName>
</protein>
<comment type="function">
    <text evidence="1">Catalyzes the reversible reaction in which hydroxymethyl group from 5,10-methylenetetrahydrofolate is transferred onto alpha-ketoisovalerate to form ketopantoate.</text>
</comment>
<comment type="catalytic activity">
    <reaction evidence="1">
        <text>3-methyl-2-oxobutanoate + (6R)-5,10-methylene-5,6,7,8-tetrahydrofolate + H2O = 2-dehydropantoate + (6S)-5,6,7,8-tetrahydrofolate</text>
        <dbReference type="Rhea" id="RHEA:11824"/>
        <dbReference type="ChEBI" id="CHEBI:11561"/>
        <dbReference type="ChEBI" id="CHEBI:11851"/>
        <dbReference type="ChEBI" id="CHEBI:15377"/>
        <dbReference type="ChEBI" id="CHEBI:15636"/>
        <dbReference type="ChEBI" id="CHEBI:57453"/>
        <dbReference type="EC" id="2.1.2.11"/>
    </reaction>
</comment>
<comment type="cofactor">
    <cofactor evidence="1">
        <name>Mg(2+)</name>
        <dbReference type="ChEBI" id="CHEBI:18420"/>
    </cofactor>
    <text evidence="1">Binds 1 Mg(2+) ion per subunit.</text>
</comment>
<comment type="pathway">
    <text evidence="1">Cofactor biosynthesis; (R)-pantothenate biosynthesis; (R)-pantoate from 3-methyl-2-oxobutanoate: step 1/2.</text>
</comment>
<comment type="subunit">
    <text evidence="1">Homodecamer; pentamer of dimers.</text>
</comment>
<comment type="subcellular location">
    <subcellularLocation>
        <location evidence="1">Cytoplasm</location>
    </subcellularLocation>
</comment>
<comment type="similarity">
    <text evidence="1">Belongs to the PanB family.</text>
</comment>
<feature type="chain" id="PRO_0000297412" description="3-methyl-2-oxobutanoate hydroxymethyltransferase">
    <location>
        <begin position="1"/>
        <end position="271"/>
    </location>
</feature>
<feature type="active site" description="Proton acceptor" evidence="1">
    <location>
        <position position="186"/>
    </location>
</feature>
<feature type="binding site" evidence="1">
    <location>
        <begin position="51"/>
        <end position="52"/>
    </location>
    <ligand>
        <name>3-methyl-2-oxobutanoate</name>
        <dbReference type="ChEBI" id="CHEBI:11851"/>
    </ligand>
</feature>
<feature type="binding site" evidence="1">
    <location>
        <position position="51"/>
    </location>
    <ligand>
        <name>Mg(2+)</name>
        <dbReference type="ChEBI" id="CHEBI:18420"/>
    </ligand>
</feature>
<feature type="binding site" evidence="1">
    <location>
        <position position="90"/>
    </location>
    <ligand>
        <name>3-methyl-2-oxobutanoate</name>
        <dbReference type="ChEBI" id="CHEBI:11851"/>
    </ligand>
</feature>
<feature type="binding site" evidence="1">
    <location>
        <position position="90"/>
    </location>
    <ligand>
        <name>Mg(2+)</name>
        <dbReference type="ChEBI" id="CHEBI:18420"/>
    </ligand>
</feature>
<feature type="binding site" evidence="1">
    <location>
        <position position="118"/>
    </location>
    <ligand>
        <name>3-methyl-2-oxobutanoate</name>
        <dbReference type="ChEBI" id="CHEBI:11851"/>
    </ligand>
</feature>
<feature type="binding site" evidence="1">
    <location>
        <position position="120"/>
    </location>
    <ligand>
        <name>Mg(2+)</name>
        <dbReference type="ChEBI" id="CHEBI:18420"/>
    </ligand>
</feature>
<organism>
    <name type="scientific">Xanthomonas oryzae pv. oryzae (strain KACC10331 / KXO85)</name>
    <dbReference type="NCBI Taxonomy" id="291331"/>
    <lineage>
        <taxon>Bacteria</taxon>
        <taxon>Pseudomonadati</taxon>
        <taxon>Pseudomonadota</taxon>
        <taxon>Gammaproteobacteria</taxon>
        <taxon>Lysobacterales</taxon>
        <taxon>Lysobacteraceae</taxon>
        <taxon>Xanthomonas</taxon>
    </lineage>
</organism>